<keyword id="KW-0963">Cytoplasm</keyword>
<keyword id="KW-0456">Lyase</keyword>
<keyword id="KW-0479">Metal-binding</keyword>
<keyword id="KW-0684">Rhamnose metabolism</keyword>
<keyword id="KW-0862">Zinc</keyword>
<gene>
    <name evidence="1" type="primary">rhaD</name>
    <name type="ordered locus">ECIAI39_3095</name>
</gene>
<accession>B7NUA6</accession>
<proteinExistence type="inferred from homology"/>
<name>RHAD_ECO7I</name>
<evidence type="ECO:0000255" key="1">
    <source>
        <dbReference type="HAMAP-Rule" id="MF_00770"/>
    </source>
</evidence>
<protein>
    <recommendedName>
        <fullName evidence="1">Rhamnulose-1-phosphate aldolase</fullName>
        <ecNumber evidence="1">4.1.2.19</ecNumber>
    </recommendedName>
</protein>
<dbReference type="EC" id="4.1.2.19" evidence="1"/>
<dbReference type="EMBL" id="CU928164">
    <property type="protein sequence ID" value="CAR19214.1"/>
    <property type="molecule type" value="Genomic_DNA"/>
</dbReference>
<dbReference type="RefSeq" id="WP_001179757.1">
    <property type="nucleotide sequence ID" value="NC_011750.1"/>
</dbReference>
<dbReference type="RefSeq" id="YP_002409025.1">
    <property type="nucleotide sequence ID" value="NC_011750.1"/>
</dbReference>
<dbReference type="SMR" id="B7NUA6"/>
<dbReference type="STRING" id="585057.ECIAI39_3095"/>
<dbReference type="KEGG" id="ect:ECIAI39_3095"/>
<dbReference type="PATRIC" id="fig|585057.6.peg.3210"/>
<dbReference type="HOGENOM" id="CLU_076831_0_0_6"/>
<dbReference type="UniPathway" id="UPA00541">
    <property type="reaction ID" value="UER00603"/>
</dbReference>
<dbReference type="Proteomes" id="UP000000749">
    <property type="component" value="Chromosome"/>
</dbReference>
<dbReference type="GO" id="GO:0005829">
    <property type="term" value="C:cytosol"/>
    <property type="evidence" value="ECO:0007669"/>
    <property type="project" value="TreeGrafter"/>
</dbReference>
<dbReference type="GO" id="GO:0046872">
    <property type="term" value="F:metal ion binding"/>
    <property type="evidence" value="ECO:0007669"/>
    <property type="project" value="UniProtKB-KW"/>
</dbReference>
<dbReference type="GO" id="GO:0008994">
    <property type="term" value="F:rhamnulose-1-phosphate aldolase activity"/>
    <property type="evidence" value="ECO:0007669"/>
    <property type="project" value="UniProtKB-UniRule"/>
</dbReference>
<dbReference type="GO" id="GO:0019323">
    <property type="term" value="P:pentose catabolic process"/>
    <property type="evidence" value="ECO:0007669"/>
    <property type="project" value="TreeGrafter"/>
</dbReference>
<dbReference type="GO" id="GO:0019301">
    <property type="term" value="P:rhamnose catabolic process"/>
    <property type="evidence" value="ECO:0007669"/>
    <property type="project" value="UniProtKB-UniRule"/>
</dbReference>
<dbReference type="CDD" id="cd00398">
    <property type="entry name" value="Aldolase_II"/>
    <property type="match status" value="1"/>
</dbReference>
<dbReference type="FunFam" id="3.40.225.10:FF:000006">
    <property type="entry name" value="Rhamnulose-1-phosphate aldolase"/>
    <property type="match status" value="1"/>
</dbReference>
<dbReference type="Gene3D" id="3.40.225.10">
    <property type="entry name" value="Class II aldolase/adducin N-terminal domain"/>
    <property type="match status" value="1"/>
</dbReference>
<dbReference type="HAMAP" id="MF_00770">
    <property type="entry name" value="RhaD"/>
    <property type="match status" value="1"/>
</dbReference>
<dbReference type="InterPro" id="IPR050197">
    <property type="entry name" value="Aldolase_class_II_sugar_metab"/>
</dbReference>
<dbReference type="InterPro" id="IPR001303">
    <property type="entry name" value="Aldolase_II/adducin_N"/>
</dbReference>
<dbReference type="InterPro" id="IPR036409">
    <property type="entry name" value="Aldolase_II/adducin_N_sf"/>
</dbReference>
<dbReference type="InterPro" id="IPR013447">
    <property type="entry name" value="Rhamnulose-1-P_Aldolase"/>
</dbReference>
<dbReference type="NCBIfam" id="NF002963">
    <property type="entry name" value="PRK03634.1"/>
    <property type="match status" value="1"/>
</dbReference>
<dbReference type="NCBIfam" id="TIGR02624">
    <property type="entry name" value="rhamnu_1P_ald"/>
    <property type="match status" value="1"/>
</dbReference>
<dbReference type="PANTHER" id="PTHR22789">
    <property type="entry name" value="FUCULOSE PHOSPHATE ALDOLASE"/>
    <property type="match status" value="1"/>
</dbReference>
<dbReference type="PANTHER" id="PTHR22789:SF16">
    <property type="entry name" value="RHAMNULOSE-1-PHOSPHATE ALDOLASE"/>
    <property type="match status" value="1"/>
</dbReference>
<dbReference type="Pfam" id="PF00596">
    <property type="entry name" value="Aldolase_II"/>
    <property type="match status" value="1"/>
</dbReference>
<dbReference type="SMART" id="SM01007">
    <property type="entry name" value="Aldolase_II"/>
    <property type="match status" value="1"/>
</dbReference>
<dbReference type="SUPFAM" id="SSF53639">
    <property type="entry name" value="AraD/HMP-PK domain-like"/>
    <property type="match status" value="1"/>
</dbReference>
<comment type="function">
    <text evidence="1">Catalyzes the reversible cleavage of L-rhamnulose-1-phosphate to dihydroxyacetone phosphate (DHAP) and L-lactaldehyde.</text>
</comment>
<comment type="catalytic activity">
    <reaction evidence="1">
        <text>L-rhamnulose 1-phosphate = (S)-lactaldehyde + dihydroxyacetone phosphate</text>
        <dbReference type="Rhea" id="RHEA:19689"/>
        <dbReference type="ChEBI" id="CHEBI:18041"/>
        <dbReference type="ChEBI" id="CHEBI:57642"/>
        <dbReference type="ChEBI" id="CHEBI:58313"/>
        <dbReference type="EC" id="4.1.2.19"/>
    </reaction>
</comment>
<comment type="cofactor">
    <cofactor evidence="1">
        <name>Zn(2+)</name>
        <dbReference type="ChEBI" id="CHEBI:29105"/>
    </cofactor>
    <text evidence="1">Binds 1 zinc ion per subunit.</text>
</comment>
<comment type="pathway">
    <text evidence="1">Carbohydrate degradation; L-rhamnose degradation; glycerone phosphate from L-rhamnose: step 3/3.</text>
</comment>
<comment type="subunit">
    <text evidence="1">Homotetramer.</text>
</comment>
<comment type="subcellular location">
    <subcellularLocation>
        <location evidence="1">Cytoplasm</location>
    </subcellularLocation>
</comment>
<comment type="similarity">
    <text evidence="1">Belongs to the aldolase class II family. RhaD subfamily.</text>
</comment>
<feature type="chain" id="PRO_1000193727" description="Rhamnulose-1-phosphate aldolase">
    <location>
        <begin position="1"/>
        <end position="274"/>
    </location>
</feature>
<feature type="active site" evidence="1">
    <location>
        <position position="117"/>
    </location>
</feature>
<feature type="binding site" evidence="1">
    <location>
        <position position="141"/>
    </location>
    <ligand>
        <name>Zn(2+)</name>
        <dbReference type="ChEBI" id="CHEBI:29105"/>
    </ligand>
</feature>
<feature type="binding site" evidence="1">
    <location>
        <position position="143"/>
    </location>
    <ligand>
        <name>Zn(2+)</name>
        <dbReference type="ChEBI" id="CHEBI:29105"/>
    </ligand>
</feature>
<feature type="binding site" evidence="1">
    <location>
        <position position="212"/>
    </location>
    <ligand>
        <name>Zn(2+)</name>
        <dbReference type="ChEBI" id="CHEBI:29105"/>
    </ligand>
</feature>
<sequence>MQNITQSWFVQGMIKATTDAWLKGWDERNGGNLTLRLDDADIAPYHGNFHAQPRYIPLSQPMPLLANTPFIVTGSGKFFRNVQLDPAANLGVVKVDSDGAGYHILWGLTNEAVPTSELPAHFLSHCERIKATNGKDRVIMHCHATNLIALTYVLENDTAVFTRQLWEGSTECLVVFPDGVGILPWMVPGTDEIGQATAQEMQKHSLVLWPFHGVFSSGPTLDETFGLIDTAEKSAQVLVKGYSMGGMKQTISREELIALGQRFGVTPLASALAL</sequence>
<reference key="1">
    <citation type="journal article" date="2009" name="PLoS Genet.">
        <title>Organised genome dynamics in the Escherichia coli species results in highly diverse adaptive paths.</title>
        <authorList>
            <person name="Touchon M."/>
            <person name="Hoede C."/>
            <person name="Tenaillon O."/>
            <person name="Barbe V."/>
            <person name="Baeriswyl S."/>
            <person name="Bidet P."/>
            <person name="Bingen E."/>
            <person name="Bonacorsi S."/>
            <person name="Bouchier C."/>
            <person name="Bouvet O."/>
            <person name="Calteau A."/>
            <person name="Chiapello H."/>
            <person name="Clermont O."/>
            <person name="Cruveiller S."/>
            <person name="Danchin A."/>
            <person name="Diard M."/>
            <person name="Dossat C."/>
            <person name="Karoui M.E."/>
            <person name="Frapy E."/>
            <person name="Garry L."/>
            <person name="Ghigo J.M."/>
            <person name="Gilles A.M."/>
            <person name="Johnson J."/>
            <person name="Le Bouguenec C."/>
            <person name="Lescat M."/>
            <person name="Mangenot S."/>
            <person name="Martinez-Jehanne V."/>
            <person name="Matic I."/>
            <person name="Nassif X."/>
            <person name="Oztas S."/>
            <person name="Petit M.A."/>
            <person name="Pichon C."/>
            <person name="Rouy Z."/>
            <person name="Ruf C.S."/>
            <person name="Schneider D."/>
            <person name="Tourret J."/>
            <person name="Vacherie B."/>
            <person name="Vallenet D."/>
            <person name="Medigue C."/>
            <person name="Rocha E.P.C."/>
            <person name="Denamur E."/>
        </authorList>
    </citation>
    <scope>NUCLEOTIDE SEQUENCE [LARGE SCALE GENOMIC DNA]</scope>
    <source>
        <strain>IAI39 / ExPEC</strain>
    </source>
</reference>
<organism>
    <name type="scientific">Escherichia coli O7:K1 (strain IAI39 / ExPEC)</name>
    <dbReference type="NCBI Taxonomy" id="585057"/>
    <lineage>
        <taxon>Bacteria</taxon>
        <taxon>Pseudomonadati</taxon>
        <taxon>Pseudomonadota</taxon>
        <taxon>Gammaproteobacteria</taxon>
        <taxon>Enterobacterales</taxon>
        <taxon>Enterobacteriaceae</taxon>
        <taxon>Escherichia</taxon>
    </lineage>
</organism>